<sequence>MMEGNVQEELELEKSVRRFREKFHGKVALETAVVLMRRFANNHNQVCTYVILYMDNDTDLDVRNHLRNDQVAMNVINKIKRDDQRAKEMPKDKDIQDLAKKMNTLPLTQKNLKMFNDAAENRIPARDRQFACKECDYMWWRRVPQRKEVSRCQRCRKKFDPVPDNKMWGIGEYNCQSCKRMFRGYGQIEVSSPCYMCSKPVSPSCILPPRRNQGPRTRNTHSCFAEYCYNRKEPFVPGLQCAHPKSRILNQLPKVLHPSEWHISTGSTIATCLSQGSLNENDIDDIILDDIKEEEDDEETDDSDS</sequence>
<accession>Q6GMD3</accession>
<name>SHFL_XENLA</name>
<keyword id="KW-0963">Cytoplasm</keyword>
<keyword id="KW-0539">Nucleus</keyword>
<keyword id="KW-1185">Reference proteome</keyword>
<keyword id="KW-0694">RNA-binding</keyword>
<comment type="function">
    <text evidence="1">Inhibits programmed -1 ribosomal frameshifting (-1PRF) of a variety of mRNAs from viruses and cellular genes. Interacts with the -1PRF signal of target mRNA and translating ribosomes and causes premature translation termination at the frameshifting site. May exhibit antiviral activity.</text>
</comment>
<comment type="subcellular location">
    <subcellularLocation>
        <location evidence="1">Cytoplasm</location>
    </subcellularLocation>
    <subcellularLocation>
        <location evidence="1">Nucleus</location>
    </subcellularLocation>
    <subcellularLocation>
        <location evidence="1">Cytoplasm</location>
        <location evidence="1">P-body</location>
    </subcellularLocation>
    <text evidence="1">Predominantly found in t for dsDNA.</text>
</comment>
<comment type="similarity">
    <text evidence="2">Belongs to the SHFL family.</text>
</comment>
<dbReference type="EMBL" id="BC074135">
    <property type="protein sequence ID" value="AAH74135.1"/>
    <property type="molecule type" value="mRNA"/>
</dbReference>
<dbReference type="RefSeq" id="NP_001086054.1">
    <property type="nucleotide sequence ID" value="NM_001092585.1"/>
</dbReference>
<dbReference type="GeneID" id="444483"/>
<dbReference type="KEGG" id="xla:444483"/>
<dbReference type="AGR" id="Xenbase:XB-GENE-951928"/>
<dbReference type="CTD" id="444483"/>
<dbReference type="Xenbase" id="XB-GENE-951928">
    <property type="gene designation" value="shfl.L"/>
</dbReference>
<dbReference type="OMA" id="PVPKDKM"/>
<dbReference type="OrthoDB" id="9423182at2759"/>
<dbReference type="Proteomes" id="UP000186698">
    <property type="component" value="Chromosome 3L"/>
</dbReference>
<dbReference type="Bgee" id="444483">
    <property type="expression patterns" value="Expressed in liver and 19 other cell types or tissues"/>
</dbReference>
<dbReference type="GO" id="GO:0005737">
    <property type="term" value="C:cytoplasm"/>
    <property type="evidence" value="ECO:0000250"/>
    <property type="project" value="UniProtKB"/>
</dbReference>
<dbReference type="GO" id="GO:0005634">
    <property type="term" value="C:nucleus"/>
    <property type="evidence" value="ECO:0000250"/>
    <property type="project" value="UniProtKB"/>
</dbReference>
<dbReference type="GO" id="GO:0000932">
    <property type="term" value="C:P-body"/>
    <property type="evidence" value="ECO:0000250"/>
    <property type="project" value="UniProtKB"/>
</dbReference>
<dbReference type="GO" id="GO:0043022">
    <property type="term" value="F:ribosome binding"/>
    <property type="evidence" value="ECO:0000250"/>
    <property type="project" value="UniProtKB"/>
</dbReference>
<dbReference type="GO" id="GO:0003723">
    <property type="term" value="F:RNA binding"/>
    <property type="evidence" value="ECO:0000250"/>
    <property type="project" value="UniProtKB"/>
</dbReference>
<dbReference type="GO" id="GO:1990825">
    <property type="term" value="F:sequence-specific mRNA binding"/>
    <property type="evidence" value="ECO:0000250"/>
    <property type="project" value="UniProtKB"/>
</dbReference>
<dbReference type="GO" id="GO:0045087">
    <property type="term" value="P:innate immune response"/>
    <property type="evidence" value="ECO:0000318"/>
    <property type="project" value="GO_Central"/>
</dbReference>
<dbReference type="GO" id="GO:2001125">
    <property type="term" value="P:negative regulation of translational frameshifting"/>
    <property type="evidence" value="ECO:0000250"/>
    <property type="project" value="UniProtKB"/>
</dbReference>
<dbReference type="GO" id="GO:0006449">
    <property type="term" value="P:regulation of translational termination"/>
    <property type="evidence" value="ECO:0000250"/>
    <property type="project" value="UniProtKB"/>
</dbReference>
<dbReference type="GO" id="GO:0035456">
    <property type="term" value="P:response to interferon-beta"/>
    <property type="evidence" value="ECO:0000250"/>
    <property type="project" value="UniProtKB"/>
</dbReference>
<dbReference type="GO" id="GO:0075523">
    <property type="term" value="P:viral translational frameshifting"/>
    <property type="evidence" value="ECO:0000250"/>
    <property type="project" value="UniProtKB"/>
</dbReference>
<dbReference type="InterPro" id="IPR026795">
    <property type="entry name" value="SHFL"/>
</dbReference>
<dbReference type="PANTHER" id="PTHR16135">
    <property type="entry name" value="REPRESSOR OF YIELD OF DENV PROTEIN"/>
    <property type="match status" value="1"/>
</dbReference>
<dbReference type="PANTHER" id="PTHR16135:SF2">
    <property type="entry name" value="SHIFTLESS ANTIVIRAL INHIBITOR OF RIBOSOMAL FRAMESHIFTING PROTEIN"/>
    <property type="match status" value="1"/>
</dbReference>
<dbReference type="Pfam" id="PF15135">
    <property type="entry name" value="UPF0515"/>
    <property type="match status" value="1"/>
</dbReference>
<feature type="chain" id="PRO_0000318705" description="Shiftless antiviral inhibitor of ribosomal frameshifting protein homolog">
    <location>
        <begin position="1"/>
        <end position="305"/>
    </location>
</feature>
<feature type="short sequence motif" description="Nuclear localization signal" evidence="1">
    <location>
        <begin position="141"/>
        <end position="157"/>
    </location>
</feature>
<feature type="short sequence motif" description="Nuclear export signal" evidence="1">
    <location>
        <begin position="279"/>
        <end position="288"/>
    </location>
</feature>
<reference key="1">
    <citation type="submission" date="2004-06" db="EMBL/GenBank/DDBJ databases">
        <authorList>
            <consortium name="NIH - Xenopus Gene Collection (XGC) project"/>
        </authorList>
    </citation>
    <scope>NUCLEOTIDE SEQUENCE [LARGE SCALE MRNA]</scope>
    <source>
        <tissue>Kidney</tissue>
    </source>
</reference>
<evidence type="ECO:0000250" key="1">
    <source>
        <dbReference type="UniProtKB" id="Q9NUL5"/>
    </source>
</evidence>
<evidence type="ECO:0000305" key="2"/>
<organism>
    <name type="scientific">Xenopus laevis</name>
    <name type="common">African clawed frog</name>
    <dbReference type="NCBI Taxonomy" id="8355"/>
    <lineage>
        <taxon>Eukaryota</taxon>
        <taxon>Metazoa</taxon>
        <taxon>Chordata</taxon>
        <taxon>Craniata</taxon>
        <taxon>Vertebrata</taxon>
        <taxon>Euteleostomi</taxon>
        <taxon>Amphibia</taxon>
        <taxon>Batrachia</taxon>
        <taxon>Anura</taxon>
        <taxon>Pipoidea</taxon>
        <taxon>Pipidae</taxon>
        <taxon>Xenopodinae</taxon>
        <taxon>Xenopus</taxon>
        <taxon>Xenopus</taxon>
    </lineage>
</organism>
<protein>
    <recommendedName>
        <fullName evidence="2">Shiftless antiviral inhibitor of ribosomal frameshifting protein homolog</fullName>
        <shortName>SHFL</shortName>
    </recommendedName>
    <alternativeName>
        <fullName>Repressor of yield of DENV protein homolog</fullName>
    </alternativeName>
</protein>
<gene>
    <name type="primary">shfl</name>
</gene>
<proteinExistence type="evidence at transcript level"/>